<dbReference type="EC" id="2.7.7.77" evidence="1"/>
<dbReference type="EMBL" id="AP009351">
    <property type="protein sequence ID" value="BAF68441.1"/>
    <property type="molecule type" value="Genomic_DNA"/>
</dbReference>
<dbReference type="RefSeq" id="WP_000643988.1">
    <property type="nucleotide sequence ID" value="NZ_JBBIAE010000006.1"/>
</dbReference>
<dbReference type="SMR" id="A6QJA9"/>
<dbReference type="KEGG" id="sae:NWMN_2169"/>
<dbReference type="HOGENOM" id="CLU_055597_2_0_9"/>
<dbReference type="Proteomes" id="UP000006386">
    <property type="component" value="Chromosome"/>
</dbReference>
<dbReference type="GO" id="GO:0005737">
    <property type="term" value="C:cytoplasm"/>
    <property type="evidence" value="ECO:0007669"/>
    <property type="project" value="UniProtKB-SubCell"/>
</dbReference>
<dbReference type="GO" id="GO:0005525">
    <property type="term" value="F:GTP binding"/>
    <property type="evidence" value="ECO:0007669"/>
    <property type="project" value="UniProtKB-UniRule"/>
</dbReference>
<dbReference type="GO" id="GO:0046872">
    <property type="term" value="F:metal ion binding"/>
    <property type="evidence" value="ECO:0007669"/>
    <property type="project" value="UniProtKB-KW"/>
</dbReference>
<dbReference type="GO" id="GO:0061603">
    <property type="term" value="F:molybdenum cofactor guanylyltransferase activity"/>
    <property type="evidence" value="ECO:0007669"/>
    <property type="project" value="UniProtKB-EC"/>
</dbReference>
<dbReference type="GO" id="GO:0006777">
    <property type="term" value="P:Mo-molybdopterin cofactor biosynthetic process"/>
    <property type="evidence" value="ECO:0007669"/>
    <property type="project" value="UniProtKB-KW"/>
</dbReference>
<dbReference type="CDD" id="cd02503">
    <property type="entry name" value="MobA"/>
    <property type="match status" value="1"/>
</dbReference>
<dbReference type="Gene3D" id="3.90.550.10">
    <property type="entry name" value="Spore Coat Polysaccharide Biosynthesis Protein SpsA, Chain A"/>
    <property type="match status" value="1"/>
</dbReference>
<dbReference type="HAMAP" id="MF_00316">
    <property type="entry name" value="MobA"/>
    <property type="match status" value="1"/>
</dbReference>
<dbReference type="InterPro" id="IPR025877">
    <property type="entry name" value="MobA-like_NTP_Trfase"/>
</dbReference>
<dbReference type="InterPro" id="IPR013482">
    <property type="entry name" value="Molybde_CF_guanTrfase"/>
</dbReference>
<dbReference type="InterPro" id="IPR029044">
    <property type="entry name" value="Nucleotide-diphossugar_trans"/>
</dbReference>
<dbReference type="NCBIfam" id="NF001457">
    <property type="entry name" value="PRK00317.1-3"/>
    <property type="match status" value="1"/>
</dbReference>
<dbReference type="PANTHER" id="PTHR19136">
    <property type="entry name" value="MOLYBDENUM COFACTOR GUANYLYLTRANSFERASE"/>
    <property type="match status" value="1"/>
</dbReference>
<dbReference type="PANTHER" id="PTHR19136:SF81">
    <property type="entry name" value="MOLYBDENUM COFACTOR GUANYLYLTRANSFERASE"/>
    <property type="match status" value="1"/>
</dbReference>
<dbReference type="Pfam" id="PF12804">
    <property type="entry name" value="NTP_transf_3"/>
    <property type="match status" value="1"/>
</dbReference>
<dbReference type="SUPFAM" id="SSF53448">
    <property type="entry name" value="Nucleotide-diphospho-sugar transferases"/>
    <property type="match status" value="1"/>
</dbReference>
<keyword id="KW-0963">Cytoplasm</keyword>
<keyword id="KW-0342">GTP-binding</keyword>
<keyword id="KW-0460">Magnesium</keyword>
<keyword id="KW-0479">Metal-binding</keyword>
<keyword id="KW-0501">Molybdenum cofactor biosynthesis</keyword>
<keyword id="KW-0547">Nucleotide-binding</keyword>
<keyword id="KW-0808">Transferase</keyword>
<organism>
    <name type="scientific">Staphylococcus aureus (strain Newman)</name>
    <dbReference type="NCBI Taxonomy" id="426430"/>
    <lineage>
        <taxon>Bacteria</taxon>
        <taxon>Bacillati</taxon>
        <taxon>Bacillota</taxon>
        <taxon>Bacilli</taxon>
        <taxon>Bacillales</taxon>
        <taxon>Staphylococcaceae</taxon>
        <taxon>Staphylococcus</taxon>
    </lineage>
</organism>
<name>MOBA_STAAE</name>
<proteinExistence type="inferred from homology"/>
<feature type="chain" id="PRO_1000072002" description="Probable molybdenum cofactor guanylyltransferase">
    <location>
        <begin position="1"/>
        <end position="199"/>
    </location>
</feature>
<feature type="binding site" evidence="1">
    <location>
        <begin position="6"/>
        <end position="8"/>
    </location>
    <ligand>
        <name>GTP</name>
        <dbReference type="ChEBI" id="CHEBI:37565"/>
    </ligand>
</feature>
<feature type="binding site" evidence="1">
    <location>
        <position position="18"/>
    </location>
    <ligand>
        <name>GTP</name>
        <dbReference type="ChEBI" id="CHEBI:37565"/>
    </ligand>
</feature>
<feature type="binding site" evidence="1">
    <location>
        <position position="65"/>
    </location>
    <ligand>
        <name>GTP</name>
        <dbReference type="ChEBI" id="CHEBI:37565"/>
    </ligand>
</feature>
<feature type="binding site" evidence="1">
    <location>
        <position position="97"/>
    </location>
    <ligand>
        <name>GTP</name>
        <dbReference type="ChEBI" id="CHEBI:37565"/>
    </ligand>
</feature>
<feature type="binding site" evidence="1">
    <location>
        <position position="97"/>
    </location>
    <ligand>
        <name>Mg(2+)</name>
        <dbReference type="ChEBI" id="CHEBI:18420"/>
    </ligand>
</feature>
<reference key="1">
    <citation type="journal article" date="2008" name="J. Bacteriol.">
        <title>Genome sequence of Staphylococcus aureus strain Newman and comparative analysis of staphylococcal genomes: polymorphism and evolution of two major pathogenicity islands.</title>
        <authorList>
            <person name="Baba T."/>
            <person name="Bae T."/>
            <person name="Schneewind O."/>
            <person name="Takeuchi F."/>
            <person name="Hiramatsu K."/>
        </authorList>
    </citation>
    <scope>NUCLEOTIDE SEQUENCE [LARGE SCALE GENOMIC DNA]</scope>
    <source>
        <strain>Newman</strain>
    </source>
</reference>
<sequence length="199" mass="22542">MKAIILAGGHSVRFGKPKAFAEVNGETFYSRVIKTLESTNMFNEIIISTNAQLATQFKYPNVVIDDENHNDKGPLAGIYTIMKQHPEEELFFVVSVDTPMITGKAVSTLYQFLVSHLIENHLDVAAFKEDGRFIPTIAFYSPNALGAITKALHSDNYSFKNVYHELSTDYLDVRDVDAPSYWYKNINYQHDLDALIQKL</sequence>
<evidence type="ECO:0000255" key="1">
    <source>
        <dbReference type="HAMAP-Rule" id="MF_00316"/>
    </source>
</evidence>
<protein>
    <recommendedName>
        <fullName evidence="1">Probable molybdenum cofactor guanylyltransferase</fullName>
        <shortName evidence="1">MoCo guanylyltransferase</shortName>
        <ecNumber evidence="1">2.7.7.77</ecNumber>
    </recommendedName>
    <alternativeName>
        <fullName evidence="1">GTP:molybdopterin guanylyltransferase</fullName>
    </alternativeName>
    <alternativeName>
        <fullName evidence="1">Mo-MPT guanylyltransferase</fullName>
    </alternativeName>
    <alternativeName>
        <fullName evidence="1">Molybdopterin guanylyltransferase</fullName>
    </alternativeName>
    <alternativeName>
        <fullName evidence="1">Molybdopterin-guanine dinucleotide synthase</fullName>
        <shortName evidence="1">MGD synthase</shortName>
    </alternativeName>
</protein>
<accession>A6QJA9</accession>
<gene>
    <name evidence="1" type="primary">mobA</name>
    <name type="ordered locus">NWMN_2169</name>
</gene>
<comment type="function">
    <text evidence="1">Transfers a GMP moiety from GTP to Mo-molybdopterin (Mo-MPT) cofactor (Moco or molybdenum cofactor) to form Mo-molybdopterin guanine dinucleotide (Mo-MGD) cofactor.</text>
</comment>
<comment type="catalytic activity">
    <reaction evidence="1">
        <text>Mo-molybdopterin + GTP + H(+) = Mo-molybdopterin guanine dinucleotide + diphosphate</text>
        <dbReference type="Rhea" id="RHEA:34243"/>
        <dbReference type="ChEBI" id="CHEBI:15378"/>
        <dbReference type="ChEBI" id="CHEBI:33019"/>
        <dbReference type="ChEBI" id="CHEBI:37565"/>
        <dbReference type="ChEBI" id="CHEBI:71302"/>
        <dbReference type="ChEBI" id="CHEBI:71310"/>
        <dbReference type="EC" id="2.7.7.77"/>
    </reaction>
</comment>
<comment type="cofactor">
    <cofactor evidence="1">
        <name>Mg(2+)</name>
        <dbReference type="ChEBI" id="CHEBI:18420"/>
    </cofactor>
</comment>
<comment type="subcellular location">
    <subcellularLocation>
        <location evidence="1">Cytoplasm</location>
    </subcellularLocation>
</comment>
<comment type="domain">
    <text evidence="1">The N-terminal domain determines nucleotide recognition and specific binding, while the C-terminal domain determines the specific binding to the target protein.</text>
</comment>
<comment type="similarity">
    <text evidence="1">Belongs to the MobA family.</text>
</comment>